<reference key="1">
    <citation type="submission" date="2005-09" db="EMBL/GenBank/DDBJ databases">
        <title>Annotation of the Aspergillus terreus NIH2624 genome.</title>
        <authorList>
            <person name="Birren B.W."/>
            <person name="Lander E.S."/>
            <person name="Galagan J.E."/>
            <person name="Nusbaum C."/>
            <person name="Devon K."/>
            <person name="Henn M."/>
            <person name="Ma L.-J."/>
            <person name="Jaffe D.B."/>
            <person name="Butler J."/>
            <person name="Alvarez P."/>
            <person name="Gnerre S."/>
            <person name="Grabherr M."/>
            <person name="Kleber M."/>
            <person name="Mauceli E.W."/>
            <person name="Brockman W."/>
            <person name="Rounsley S."/>
            <person name="Young S.K."/>
            <person name="LaButti K."/>
            <person name="Pushparaj V."/>
            <person name="DeCaprio D."/>
            <person name="Crawford M."/>
            <person name="Koehrsen M."/>
            <person name="Engels R."/>
            <person name="Montgomery P."/>
            <person name="Pearson M."/>
            <person name="Howarth C."/>
            <person name="Larson L."/>
            <person name="Luoma S."/>
            <person name="White J."/>
            <person name="Alvarado L."/>
            <person name="Kodira C.D."/>
            <person name="Zeng Q."/>
            <person name="Oleary S."/>
            <person name="Yandava C."/>
            <person name="Denning D.W."/>
            <person name="Nierman W.C."/>
            <person name="Milne T."/>
            <person name="Madden K."/>
        </authorList>
    </citation>
    <scope>NUCLEOTIDE SEQUENCE [LARGE SCALE GENOMIC DNA]</scope>
    <source>
        <strain>NIH 2624 / FGSC A1156</strain>
    </source>
</reference>
<evidence type="ECO:0000255" key="1">
    <source>
        <dbReference type="HAMAP-Rule" id="MF_03050"/>
    </source>
</evidence>
<evidence type="ECO:0000256" key="2">
    <source>
        <dbReference type="SAM" id="MobiDB-lite"/>
    </source>
</evidence>
<comment type="function">
    <text evidence="1">Sulfurates the molybdenum cofactor. Sulfation of molybdenum is essential for xanthine dehydrogenase (XDH) and aldehyde oxidase (ADO) enzymes in which molybdenum cofactor is liganded by 1 oxygen and 1 sulfur atom in active form.</text>
</comment>
<comment type="catalytic activity">
    <reaction evidence="1">
        <text>Mo-molybdopterin + L-cysteine + AH2 = thio-Mo-molybdopterin + L-alanine + A + H2O</text>
        <dbReference type="Rhea" id="RHEA:42636"/>
        <dbReference type="ChEBI" id="CHEBI:13193"/>
        <dbReference type="ChEBI" id="CHEBI:15377"/>
        <dbReference type="ChEBI" id="CHEBI:17499"/>
        <dbReference type="ChEBI" id="CHEBI:35235"/>
        <dbReference type="ChEBI" id="CHEBI:57972"/>
        <dbReference type="ChEBI" id="CHEBI:71302"/>
        <dbReference type="ChEBI" id="CHEBI:82685"/>
        <dbReference type="EC" id="2.8.1.9"/>
    </reaction>
</comment>
<comment type="cofactor">
    <cofactor evidence="1">
        <name>pyridoxal 5'-phosphate</name>
        <dbReference type="ChEBI" id="CHEBI:597326"/>
    </cofactor>
</comment>
<comment type="similarity">
    <text evidence="1">Belongs to the class-V pyridoxal-phosphate-dependent aminotransferase family. MOCOS subfamily.</text>
</comment>
<gene>
    <name evidence="1" type="primary">hxB</name>
    <name type="ORF">ATEG_05316</name>
</gene>
<name>MOCOS_ASPTN</name>
<proteinExistence type="inferred from homology"/>
<feature type="chain" id="PRO_0000369381" description="Molybdenum cofactor sulfurase">
    <location>
        <begin position="1"/>
        <end position="828"/>
    </location>
</feature>
<feature type="domain" description="MOSC" evidence="1">
    <location>
        <begin position="652"/>
        <end position="825"/>
    </location>
</feature>
<feature type="region of interest" description="Disordered" evidence="2">
    <location>
        <begin position="638"/>
        <end position="682"/>
    </location>
</feature>
<feature type="active site" evidence="1">
    <location>
        <position position="402"/>
    </location>
</feature>
<feature type="modified residue" description="N6-(pyridoxal phosphate)lysine" evidence="1">
    <location>
        <position position="239"/>
    </location>
</feature>
<sequence>MTEAIINEGSPLGYSQGYSEDIDAIRQREYPMLSDTTYLDHAGTTLYAKSLIDSFSRDLTTNLFGNPHSLSASSQRTTQRVDDIRLRALRFFNADPEHFDLVFVANATSAIKLVADALRDSAHGFWYGYHVDAHTSLVGARELAQAGSRCFTTDEEVEAWIAQLDADRTGAAQLFAFPAQSNMNGRRLPLRWCGRIRDRTKETATTYTLLDAASLVATSPLDLSDVSAASDFTVLSFYKIFGFPDLGALIVRKSAGHIFAQRRFFGGGTVDMVLTQDTQWHAKKRSVHEILEDGTLPFHNIIALDSALDTHARLYGSMGNVSTHTRFLARTLYDRLAALRHFNGERVVHFYMGRSPDFADASAQGPILAFNLRSSQGGWIGKSEVERLASVKSLQIRSGTLCNPGGTASQLGWSGADMLRHFSAGLRCGDDHDVMDGRPTGILRVSLGAMSNLRDVEAFVAFVEEFYVEKTPNVCSVVPSAADDSLQAGFYVESLAVYPIKSCGAFKVPDGQRWEIRREGLAWDREWCLVHQGTGAALNQKRYPRMALIRPHIDLARGVLRVVCGEASSEQKTLEISLRREDASLVTTSLCQNAAKPSTVCGDQVVVQVYSSTAVSSFFSTFLDVPCTLARFPPQSTTRYTRRSLHSRSSTAALRRQRPVEESSMPGSFPSDTPLSRTPEPPPILLANESPILLISRSSVNRLNETIKASAKKAVAADVFRANIVVAENLPHQLANTERPYIEDRWESFTVGPDRLQFDVLGSCQRCQMVCIDQCSGERRDEPFSTLAKTRKVGSQIVFGRHAAVADGVDGISRTVMVGDVVRPWYPE</sequence>
<organism>
    <name type="scientific">Aspergillus terreus (strain NIH 2624 / FGSC A1156)</name>
    <dbReference type="NCBI Taxonomy" id="341663"/>
    <lineage>
        <taxon>Eukaryota</taxon>
        <taxon>Fungi</taxon>
        <taxon>Dikarya</taxon>
        <taxon>Ascomycota</taxon>
        <taxon>Pezizomycotina</taxon>
        <taxon>Eurotiomycetes</taxon>
        <taxon>Eurotiomycetidae</taxon>
        <taxon>Eurotiales</taxon>
        <taxon>Aspergillaceae</taxon>
        <taxon>Aspergillus</taxon>
        <taxon>Aspergillus subgen. Circumdati</taxon>
    </lineage>
</organism>
<accession>Q0CLW8</accession>
<protein>
    <recommendedName>
        <fullName evidence="1">Molybdenum cofactor sulfurase</fullName>
        <shortName evidence="1">MCS</shortName>
        <shortName evidence="1">MOS</shortName>
        <shortName evidence="1">MoCo sulfurase</shortName>
        <ecNumber evidence="1">2.8.1.9</ecNumber>
    </recommendedName>
    <alternativeName>
        <fullName evidence="1">Molybdenum cofactor sulfurtransferase</fullName>
    </alternativeName>
</protein>
<dbReference type="EC" id="2.8.1.9" evidence="1"/>
<dbReference type="EMBL" id="CH476600">
    <property type="protein sequence ID" value="EAU34385.1"/>
    <property type="molecule type" value="Genomic_DNA"/>
</dbReference>
<dbReference type="RefSeq" id="XP_001214494.1">
    <property type="nucleotide sequence ID" value="XM_001214494.1"/>
</dbReference>
<dbReference type="SMR" id="Q0CLW8"/>
<dbReference type="STRING" id="341663.Q0CLW8"/>
<dbReference type="EnsemblFungi" id="EAU34385">
    <property type="protein sequence ID" value="EAU34385"/>
    <property type="gene ID" value="ATEG_05316"/>
</dbReference>
<dbReference type="GeneID" id="4321216"/>
<dbReference type="VEuPathDB" id="FungiDB:ATEG_05316"/>
<dbReference type="eggNOG" id="KOG2142">
    <property type="taxonomic scope" value="Eukaryota"/>
</dbReference>
<dbReference type="HOGENOM" id="CLU_010913_0_0_1"/>
<dbReference type="OMA" id="PCTRCQM"/>
<dbReference type="OrthoDB" id="10264306at2759"/>
<dbReference type="Proteomes" id="UP000007963">
    <property type="component" value="Unassembled WGS sequence"/>
</dbReference>
<dbReference type="GO" id="GO:0016829">
    <property type="term" value="F:lyase activity"/>
    <property type="evidence" value="ECO:0007669"/>
    <property type="project" value="UniProtKB-UniRule"/>
</dbReference>
<dbReference type="GO" id="GO:0008265">
    <property type="term" value="F:molybdenum cofactor sulfurtransferase activity"/>
    <property type="evidence" value="ECO:0007669"/>
    <property type="project" value="UniProtKB-UniRule"/>
</dbReference>
<dbReference type="GO" id="GO:0030151">
    <property type="term" value="F:molybdenum ion binding"/>
    <property type="evidence" value="ECO:0007669"/>
    <property type="project" value="UniProtKB-UniRule"/>
</dbReference>
<dbReference type="GO" id="GO:0030170">
    <property type="term" value="F:pyridoxal phosphate binding"/>
    <property type="evidence" value="ECO:0007669"/>
    <property type="project" value="UniProtKB-UniRule"/>
</dbReference>
<dbReference type="GO" id="GO:0006777">
    <property type="term" value="P:Mo-molybdopterin cofactor biosynthetic process"/>
    <property type="evidence" value="ECO:0007669"/>
    <property type="project" value="UniProtKB-UniRule"/>
</dbReference>
<dbReference type="Gene3D" id="3.90.1150.10">
    <property type="entry name" value="Aspartate Aminotransferase, domain 1"/>
    <property type="match status" value="1"/>
</dbReference>
<dbReference type="Gene3D" id="3.40.640.10">
    <property type="entry name" value="Type I PLP-dependent aspartate aminotransferase-like (Major domain)"/>
    <property type="match status" value="1"/>
</dbReference>
<dbReference type="HAMAP" id="MF_03050">
    <property type="entry name" value="MOCOS"/>
    <property type="match status" value="1"/>
</dbReference>
<dbReference type="InterPro" id="IPR000192">
    <property type="entry name" value="Aminotrans_V_dom"/>
</dbReference>
<dbReference type="InterPro" id="IPR005302">
    <property type="entry name" value="MoCF_Sase_C"/>
</dbReference>
<dbReference type="InterPro" id="IPR028886">
    <property type="entry name" value="MoCo_sulfurase"/>
</dbReference>
<dbReference type="InterPro" id="IPR005303">
    <property type="entry name" value="MOCOS_middle"/>
</dbReference>
<dbReference type="InterPro" id="IPR015424">
    <property type="entry name" value="PyrdxlP-dep_Trfase"/>
</dbReference>
<dbReference type="InterPro" id="IPR015421">
    <property type="entry name" value="PyrdxlP-dep_Trfase_major"/>
</dbReference>
<dbReference type="InterPro" id="IPR015422">
    <property type="entry name" value="PyrdxlP-dep_Trfase_small"/>
</dbReference>
<dbReference type="PANTHER" id="PTHR14237:SF19">
    <property type="entry name" value="MITOCHONDRIAL AMIDOXIME REDUCING COMPONENT 1"/>
    <property type="match status" value="1"/>
</dbReference>
<dbReference type="PANTHER" id="PTHR14237">
    <property type="entry name" value="MOLYBDOPTERIN COFACTOR SULFURASE MOSC"/>
    <property type="match status" value="1"/>
</dbReference>
<dbReference type="Pfam" id="PF00266">
    <property type="entry name" value="Aminotran_5"/>
    <property type="match status" value="1"/>
</dbReference>
<dbReference type="Pfam" id="PF03473">
    <property type="entry name" value="MOSC"/>
    <property type="match status" value="1"/>
</dbReference>
<dbReference type="Pfam" id="PF03476">
    <property type="entry name" value="MOSC_N"/>
    <property type="match status" value="1"/>
</dbReference>
<dbReference type="SUPFAM" id="SSF141673">
    <property type="entry name" value="MOSC N-terminal domain-like"/>
    <property type="match status" value="1"/>
</dbReference>
<dbReference type="SUPFAM" id="SSF53383">
    <property type="entry name" value="PLP-dependent transferases"/>
    <property type="match status" value="1"/>
</dbReference>
<dbReference type="PROSITE" id="PS51340">
    <property type="entry name" value="MOSC"/>
    <property type="match status" value="1"/>
</dbReference>
<keyword id="KW-0501">Molybdenum cofactor biosynthesis</keyword>
<keyword id="KW-0663">Pyridoxal phosphate</keyword>
<keyword id="KW-1185">Reference proteome</keyword>
<keyword id="KW-0808">Transferase</keyword>